<keyword id="KW-0687">Ribonucleoprotein</keyword>
<keyword id="KW-0689">Ribosomal protein</keyword>
<reference key="1">
    <citation type="submission" date="2007-10" db="EMBL/GenBank/DDBJ databases">
        <title>Complete sequence of Methanococcus maripaludis C6.</title>
        <authorList>
            <consortium name="US DOE Joint Genome Institute"/>
            <person name="Copeland A."/>
            <person name="Lucas S."/>
            <person name="Lapidus A."/>
            <person name="Barry K."/>
            <person name="Glavina del Rio T."/>
            <person name="Dalin E."/>
            <person name="Tice H."/>
            <person name="Pitluck S."/>
            <person name="Clum A."/>
            <person name="Schmutz J."/>
            <person name="Larimer F."/>
            <person name="Land M."/>
            <person name="Hauser L."/>
            <person name="Kyrpides N."/>
            <person name="Mikhailova N."/>
            <person name="Sieprawska-Lupa M."/>
            <person name="Whitman W.B."/>
            <person name="Richardson P."/>
        </authorList>
    </citation>
    <scope>NUCLEOTIDE SEQUENCE [LARGE SCALE GENOMIC DNA]</scope>
    <source>
        <strain>C6 / ATCC BAA-1332</strain>
    </source>
</reference>
<evidence type="ECO:0000255" key="1">
    <source>
        <dbReference type="HAMAP-Rule" id="MF_00256"/>
    </source>
</evidence>
<evidence type="ECO:0000256" key="2">
    <source>
        <dbReference type="SAM" id="MobiDB-lite"/>
    </source>
</evidence>
<evidence type="ECO:0000305" key="3"/>
<proteinExistence type="inferred from homology"/>
<organism>
    <name type="scientific">Methanococcus maripaludis (strain C6 / ATCC BAA-1332)</name>
    <dbReference type="NCBI Taxonomy" id="444158"/>
    <lineage>
        <taxon>Archaea</taxon>
        <taxon>Methanobacteriati</taxon>
        <taxon>Methanobacteriota</taxon>
        <taxon>Methanomada group</taxon>
        <taxon>Methanococci</taxon>
        <taxon>Methanococcales</taxon>
        <taxon>Methanococcaceae</taxon>
        <taxon>Methanococcus</taxon>
    </lineage>
</organism>
<comment type="similarity">
    <text evidence="1">Belongs to the eukaryotic ribosomal protein eL15 family.</text>
</comment>
<feature type="chain" id="PRO_1000114027" description="Large ribosomal subunit protein eL15">
    <location>
        <begin position="1"/>
        <end position="194"/>
    </location>
</feature>
<feature type="region of interest" description="Disordered" evidence="2">
    <location>
        <begin position="160"/>
        <end position="194"/>
    </location>
</feature>
<dbReference type="EMBL" id="CP000867">
    <property type="protein sequence ID" value="ABX01472.1"/>
    <property type="molecule type" value="Genomic_DNA"/>
</dbReference>
<dbReference type="SMR" id="A9A7T0"/>
<dbReference type="STRING" id="444158.MmarC6_0655"/>
<dbReference type="KEGG" id="mmx:MmarC6_0655"/>
<dbReference type="eggNOG" id="arCOG04209">
    <property type="taxonomic scope" value="Archaea"/>
</dbReference>
<dbReference type="HOGENOM" id="CLU_080796_1_0_2"/>
<dbReference type="OrthoDB" id="8183at2157"/>
<dbReference type="PhylomeDB" id="A9A7T0"/>
<dbReference type="GO" id="GO:0022625">
    <property type="term" value="C:cytosolic large ribosomal subunit"/>
    <property type="evidence" value="ECO:0007669"/>
    <property type="project" value="TreeGrafter"/>
</dbReference>
<dbReference type="GO" id="GO:0003723">
    <property type="term" value="F:RNA binding"/>
    <property type="evidence" value="ECO:0007669"/>
    <property type="project" value="TreeGrafter"/>
</dbReference>
<dbReference type="GO" id="GO:0003735">
    <property type="term" value="F:structural constituent of ribosome"/>
    <property type="evidence" value="ECO:0007669"/>
    <property type="project" value="InterPro"/>
</dbReference>
<dbReference type="GO" id="GO:0002181">
    <property type="term" value="P:cytoplasmic translation"/>
    <property type="evidence" value="ECO:0007669"/>
    <property type="project" value="TreeGrafter"/>
</dbReference>
<dbReference type="FunFam" id="3.40.1120.10:FF:000002">
    <property type="entry name" value="50S ribosomal protein L15e"/>
    <property type="match status" value="1"/>
</dbReference>
<dbReference type="Gene3D" id="3.40.1120.10">
    <property type="entry name" value="Ribosomal protein l15e"/>
    <property type="match status" value="1"/>
</dbReference>
<dbReference type="HAMAP" id="MF_00256">
    <property type="entry name" value="Ribosomal_eL15"/>
    <property type="match status" value="1"/>
</dbReference>
<dbReference type="InterPro" id="IPR024794">
    <property type="entry name" value="Rbsml_eL15_core_dom_sf"/>
</dbReference>
<dbReference type="InterPro" id="IPR000439">
    <property type="entry name" value="Ribosomal_eL15"/>
</dbReference>
<dbReference type="InterPro" id="IPR020926">
    <property type="entry name" value="Ribosomal_eL15_arc"/>
</dbReference>
<dbReference type="InterPro" id="IPR020925">
    <property type="entry name" value="Ribosomal_eL15_CS"/>
</dbReference>
<dbReference type="InterPro" id="IPR012678">
    <property type="entry name" value="Ribosomal_uL23/eL15/eS24_sf"/>
</dbReference>
<dbReference type="NCBIfam" id="NF003269">
    <property type="entry name" value="PRK04243.1"/>
    <property type="match status" value="1"/>
</dbReference>
<dbReference type="PANTHER" id="PTHR11847:SF4">
    <property type="entry name" value="LARGE RIBOSOMAL SUBUNIT PROTEIN EL15"/>
    <property type="match status" value="1"/>
</dbReference>
<dbReference type="PANTHER" id="PTHR11847">
    <property type="entry name" value="RIBOSOMAL PROTEIN L15"/>
    <property type="match status" value="1"/>
</dbReference>
<dbReference type="Pfam" id="PF00827">
    <property type="entry name" value="Ribosomal_L15e"/>
    <property type="match status" value="1"/>
</dbReference>
<dbReference type="SMART" id="SM01384">
    <property type="entry name" value="Ribosomal_L15e"/>
    <property type="match status" value="1"/>
</dbReference>
<dbReference type="SUPFAM" id="SSF54189">
    <property type="entry name" value="Ribosomal proteins S24e, L23 and L15e"/>
    <property type="match status" value="1"/>
</dbReference>
<dbReference type="PROSITE" id="PS01194">
    <property type="entry name" value="RIBOSOMAL_L15E"/>
    <property type="match status" value="1"/>
</dbReference>
<gene>
    <name evidence="1" type="primary">rpl15e</name>
    <name type="ordered locus">MmarC6_0655</name>
</gene>
<name>RL15E_METM6</name>
<sequence length="194" mass="22243">MSMYNYVKEAWKVPANSYVKELQWSRMQDWRKEPSVIRVERPTRIDRARNLGYKAKQGIVVVRVSVRRGGLRKPRPKHSKKPSTLGINKITMAKSIQRIAEERAAKKYPNLEVLNSYWVGQDGKQKWYEVILVDSCHPSIKSDKSYNWLCKGTHKGRATRGLTSAGKKGRGLMYKGKGAEKVRPSVRANSKKAK</sequence>
<protein>
    <recommendedName>
        <fullName evidence="1">Large ribosomal subunit protein eL15</fullName>
    </recommendedName>
    <alternativeName>
        <fullName evidence="3">50S ribosomal protein L15e</fullName>
    </alternativeName>
</protein>
<accession>A9A7T0</accession>